<dbReference type="EC" id="1.1.1.25" evidence="1"/>
<dbReference type="EMBL" id="CP001182">
    <property type="protein sequence ID" value="ACJ42926.1"/>
    <property type="molecule type" value="Genomic_DNA"/>
</dbReference>
<dbReference type="RefSeq" id="WP_000166013.1">
    <property type="nucleotide sequence ID" value="NC_011586.2"/>
</dbReference>
<dbReference type="SMR" id="B7IA68"/>
<dbReference type="KEGG" id="abn:AB57_3561"/>
<dbReference type="HOGENOM" id="CLU_044063_2_1_6"/>
<dbReference type="UniPathway" id="UPA00053">
    <property type="reaction ID" value="UER00087"/>
</dbReference>
<dbReference type="Proteomes" id="UP000007094">
    <property type="component" value="Chromosome"/>
</dbReference>
<dbReference type="GO" id="GO:0005829">
    <property type="term" value="C:cytosol"/>
    <property type="evidence" value="ECO:0007669"/>
    <property type="project" value="TreeGrafter"/>
</dbReference>
<dbReference type="GO" id="GO:0050661">
    <property type="term" value="F:NADP binding"/>
    <property type="evidence" value="ECO:0007669"/>
    <property type="project" value="InterPro"/>
</dbReference>
<dbReference type="GO" id="GO:0004764">
    <property type="term" value="F:shikimate 3-dehydrogenase (NADP+) activity"/>
    <property type="evidence" value="ECO:0007669"/>
    <property type="project" value="UniProtKB-UniRule"/>
</dbReference>
<dbReference type="GO" id="GO:0008652">
    <property type="term" value="P:amino acid biosynthetic process"/>
    <property type="evidence" value="ECO:0007669"/>
    <property type="project" value="UniProtKB-KW"/>
</dbReference>
<dbReference type="GO" id="GO:0009073">
    <property type="term" value="P:aromatic amino acid family biosynthetic process"/>
    <property type="evidence" value="ECO:0007669"/>
    <property type="project" value="UniProtKB-KW"/>
</dbReference>
<dbReference type="GO" id="GO:0009423">
    <property type="term" value="P:chorismate biosynthetic process"/>
    <property type="evidence" value="ECO:0007669"/>
    <property type="project" value="UniProtKB-UniRule"/>
</dbReference>
<dbReference type="GO" id="GO:0019632">
    <property type="term" value="P:shikimate metabolic process"/>
    <property type="evidence" value="ECO:0007669"/>
    <property type="project" value="InterPro"/>
</dbReference>
<dbReference type="CDD" id="cd01065">
    <property type="entry name" value="NAD_bind_Shikimate_DH"/>
    <property type="match status" value="1"/>
</dbReference>
<dbReference type="FunFam" id="3.40.50.10860:FF:000006">
    <property type="entry name" value="Shikimate dehydrogenase (NADP(+))"/>
    <property type="match status" value="1"/>
</dbReference>
<dbReference type="Gene3D" id="3.40.50.10860">
    <property type="entry name" value="Leucine Dehydrogenase, chain A, domain 1"/>
    <property type="match status" value="1"/>
</dbReference>
<dbReference type="Gene3D" id="3.40.50.720">
    <property type="entry name" value="NAD(P)-binding Rossmann-like Domain"/>
    <property type="match status" value="1"/>
</dbReference>
<dbReference type="HAMAP" id="MF_00222">
    <property type="entry name" value="Shikimate_DH_AroE"/>
    <property type="match status" value="1"/>
</dbReference>
<dbReference type="InterPro" id="IPR046346">
    <property type="entry name" value="Aminoacid_DH-like_N_sf"/>
</dbReference>
<dbReference type="InterPro" id="IPR036291">
    <property type="entry name" value="NAD(P)-bd_dom_sf"/>
</dbReference>
<dbReference type="InterPro" id="IPR041121">
    <property type="entry name" value="SDH_C"/>
</dbReference>
<dbReference type="InterPro" id="IPR011342">
    <property type="entry name" value="Shikimate_DH"/>
</dbReference>
<dbReference type="InterPro" id="IPR013708">
    <property type="entry name" value="Shikimate_DH-bd_N"/>
</dbReference>
<dbReference type="InterPro" id="IPR022893">
    <property type="entry name" value="Shikimate_DH_fam"/>
</dbReference>
<dbReference type="InterPro" id="IPR006151">
    <property type="entry name" value="Shikm_DH/Glu-tRNA_Rdtase"/>
</dbReference>
<dbReference type="NCBIfam" id="TIGR00507">
    <property type="entry name" value="aroE"/>
    <property type="match status" value="1"/>
</dbReference>
<dbReference type="NCBIfam" id="NF001310">
    <property type="entry name" value="PRK00258.1-2"/>
    <property type="match status" value="1"/>
</dbReference>
<dbReference type="PANTHER" id="PTHR21089:SF1">
    <property type="entry name" value="BIFUNCTIONAL 3-DEHYDROQUINATE DEHYDRATASE_SHIKIMATE DEHYDROGENASE, CHLOROPLASTIC"/>
    <property type="match status" value="1"/>
</dbReference>
<dbReference type="PANTHER" id="PTHR21089">
    <property type="entry name" value="SHIKIMATE DEHYDROGENASE"/>
    <property type="match status" value="1"/>
</dbReference>
<dbReference type="Pfam" id="PF18317">
    <property type="entry name" value="SDH_C"/>
    <property type="match status" value="1"/>
</dbReference>
<dbReference type="Pfam" id="PF01488">
    <property type="entry name" value="Shikimate_DH"/>
    <property type="match status" value="1"/>
</dbReference>
<dbReference type="Pfam" id="PF08501">
    <property type="entry name" value="Shikimate_dh_N"/>
    <property type="match status" value="1"/>
</dbReference>
<dbReference type="SUPFAM" id="SSF53223">
    <property type="entry name" value="Aminoacid dehydrogenase-like, N-terminal domain"/>
    <property type="match status" value="1"/>
</dbReference>
<dbReference type="SUPFAM" id="SSF51735">
    <property type="entry name" value="NAD(P)-binding Rossmann-fold domains"/>
    <property type="match status" value="1"/>
</dbReference>
<protein>
    <recommendedName>
        <fullName evidence="1">Shikimate dehydrogenase (NADP(+))</fullName>
        <shortName evidence="1">SDH</shortName>
        <ecNumber evidence="1">1.1.1.25</ecNumber>
    </recommendedName>
</protein>
<evidence type="ECO:0000255" key="1">
    <source>
        <dbReference type="HAMAP-Rule" id="MF_00222"/>
    </source>
</evidence>
<name>AROE_ACIB5</name>
<organism>
    <name type="scientific">Acinetobacter baumannii (strain AB0057)</name>
    <dbReference type="NCBI Taxonomy" id="480119"/>
    <lineage>
        <taxon>Bacteria</taxon>
        <taxon>Pseudomonadati</taxon>
        <taxon>Pseudomonadota</taxon>
        <taxon>Gammaproteobacteria</taxon>
        <taxon>Moraxellales</taxon>
        <taxon>Moraxellaceae</taxon>
        <taxon>Acinetobacter</taxon>
        <taxon>Acinetobacter calcoaceticus/baumannii complex</taxon>
    </lineage>
</organism>
<sequence>MTKQFAVIGNPIEQSRSPELHHAFAEKTGVDLNYQKRLAPLDGFESSMRSFFAEGGSGMNVTVPFKEQAFALCDVLTERAQIAKAVNTLWMENGKLHGDNTDGQGLVAAIQALEWNLENTTILILGAGGATRGVIYPLVQAGAQKIVIANRTLARAEQLVDDLKTAVPQAQLQAISLNDLEGDFDIVINATSTSLSGDALQLPEKLQFKYAYEMAYGKPSSFIDQAKQRNVPYAEGFGMLVGQAIEAFYIWNGVRPQLKDFL</sequence>
<keyword id="KW-0028">Amino-acid biosynthesis</keyword>
<keyword id="KW-0057">Aromatic amino acid biosynthesis</keyword>
<keyword id="KW-0521">NADP</keyword>
<keyword id="KW-0560">Oxidoreductase</keyword>
<gene>
    <name evidence="1" type="primary">aroE</name>
    <name type="ordered locus">AB57_3561</name>
</gene>
<feature type="chain" id="PRO_1000118867" description="Shikimate dehydrogenase (NADP(+))">
    <location>
        <begin position="1"/>
        <end position="262"/>
    </location>
</feature>
<feature type="active site" description="Proton acceptor" evidence="1">
    <location>
        <position position="66"/>
    </location>
</feature>
<feature type="binding site" evidence="1">
    <location>
        <begin position="15"/>
        <end position="17"/>
    </location>
    <ligand>
        <name>shikimate</name>
        <dbReference type="ChEBI" id="CHEBI:36208"/>
    </ligand>
</feature>
<feature type="binding site" evidence="1">
    <location>
        <position position="62"/>
    </location>
    <ligand>
        <name>shikimate</name>
        <dbReference type="ChEBI" id="CHEBI:36208"/>
    </ligand>
</feature>
<feature type="binding site" evidence="1">
    <location>
        <position position="78"/>
    </location>
    <ligand>
        <name>NADP(+)</name>
        <dbReference type="ChEBI" id="CHEBI:58349"/>
    </ligand>
</feature>
<feature type="binding site" evidence="1">
    <location>
        <position position="87"/>
    </location>
    <ligand>
        <name>shikimate</name>
        <dbReference type="ChEBI" id="CHEBI:36208"/>
    </ligand>
</feature>
<feature type="binding site" evidence="1">
    <location>
        <position position="102"/>
    </location>
    <ligand>
        <name>shikimate</name>
        <dbReference type="ChEBI" id="CHEBI:36208"/>
    </ligand>
</feature>
<feature type="binding site" evidence="1">
    <location>
        <begin position="126"/>
        <end position="130"/>
    </location>
    <ligand>
        <name>NADP(+)</name>
        <dbReference type="ChEBI" id="CHEBI:58349"/>
    </ligand>
</feature>
<feature type="binding site" evidence="1">
    <location>
        <begin position="150"/>
        <end position="155"/>
    </location>
    <ligand>
        <name>NADP(+)</name>
        <dbReference type="ChEBI" id="CHEBI:58349"/>
    </ligand>
</feature>
<feature type="binding site" evidence="1">
    <location>
        <position position="214"/>
    </location>
    <ligand>
        <name>NADP(+)</name>
        <dbReference type="ChEBI" id="CHEBI:58349"/>
    </ligand>
</feature>
<feature type="binding site" evidence="1">
    <location>
        <position position="216"/>
    </location>
    <ligand>
        <name>shikimate</name>
        <dbReference type="ChEBI" id="CHEBI:36208"/>
    </ligand>
</feature>
<feature type="binding site" evidence="1">
    <location>
        <position position="236"/>
    </location>
    <ligand>
        <name>NADP(+)</name>
        <dbReference type="ChEBI" id="CHEBI:58349"/>
    </ligand>
</feature>
<comment type="function">
    <text evidence="1">Involved in the biosynthesis of the chorismate, which leads to the biosynthesis of aromatic amino acids. Catalyzes the reversible NADPH linked reduction of 3-dehydroshikimate (DHSA) to yield shikimate (SA).</text>
</comment>
<comment type="catalytic activity">
    <reaction evidence="1">
        <text>shikimate + NADP(+) = 3-dehydroshikimate + NADPH + H(+)</text>
        <dbReference type="Rhea" id="RHEA:17737"/>
        <dbReference type="ChEBI" id="CHEBI:15378"/>
        <dbReference type="ChEBI" id="CHEBI:16630"/>
        <dbReference type="ChEBI" id="CHEBI:36208"/>
        <dbReference type="ChEBI" id="CHEBI:57783"/>
        <dbReference type="ChEBI" id="CHEBI:58349"/>
        <dbReference type="EC" id="1.1.1.25"/>
    </reaction>
</comment>
<comment type="pathway">
    <text evidence="1">Metabolic intermediate biosynthesis; chorismate biosynthesis; chorismate from D-erythrose 4-phosphate and phosphoenolpyruvate: step 4/7.</text>
</comment>
<comment type="subunit">
    <text evidence="1">Homodimer.</text>
</comment>
<comment type="similarity">
    <text evidence="1">Belongs to the shikimate dehydrogenase family.</text>
</comment>
<accession>B7IA68</accession>
<proteinExistence type="inferred from homology"/>
<reference key="1">
    <citation type="journal article" date="2008" name="J. Bacteriol.">
        <title>Comparative genome sequence analysis of multidrug-resistant Acinetobacter baumannii.</title>
        <authorList>
            <person name="Adams M.D."/>
            <person name="Goglin K."/>
            <person name="Molyneaux N."/>
            <person name="Hujer K.M."/>
            <person name="Lavender H."/>
            <person name="Jamison J.J."/>
            <person name="MacDonald I.J."/>
            <person name="Martin K.M."/>
            <person name="Russo T."/>
            <person name="Campagnari A.A."/>
            <person name="Hujer A.M."/>
            <person name="Bonomo R.A."/>
            <person name="Gill S.R."/>
        </authorList>
    </citation>
    <scope>NUCLEOTIDE SEQUENCE [LARGE SCALE GENOMIC DNA]</scope>
    <source>
        <strain>AB0057</strain>
    </source>
</reference>